<sequence>MEDFVRQCFNPMIVELAEKAMKEYGEDPKIETNKFAAICTHLEVCFMYSDFHFIDERGESIIVESGDPNALLKHRFEIIEGRDRTMAWTVVNSICNTTGVEKPKFLPDLYDYKENRFIEIGVTRREVHIYYLEKANKIKSEKTHIHIFSFTGEEMATKADYTLDEESRARIKTRLFTIRQEMASRGLWDSFVSQREAKRQLKKDLKLQEPCAGLPTKVSHRTSPALKTLEPMWMDSNRTAALRASFLKCQKK</sequence>
<feature type="chain" id="PRO_0000419375" description="Protein PA-X">
    <location>
        <begin position="1"/>
        <end position="252"/>
    </location>
</feature>
<feature type="active site" evidence="2">
    <location>
        <position position="80"/>
    </location>
</feature>
<feature type="active site" evidence="2">
    <location>
        <position position="108"/>
    </location>
</feature>
<feature type="site" description="Important for efficient shutoff activity and nuclear localization" evidence="4">
    <location>
        <position position="195"/>
    </location>
</feature>
<feature type="site" description="Important for efficient shutoff activity and nuclear localization" evidence="4">
    <location>
        <position position="198"/>
    </location>
</feature>
<feature type="site" description="Important for efficient shutoff activity and nuclear localization" evidence="4">
    <location>
        <position position="199"/>
    </location>
</feature>
<feature type="site" description="Important for efficient shutoff activity" evidence="3">
    <location>
        <position position="202"/>
    </location>
</feature>
<feature type="site" description="Important for efficient shutoff activity" evidence="3">
    <location>
        <position position="203"/>
    </location>
</feature>
<feature type="site" description="Important for efficient shutoff activity" evidence="3">
    <location>
        <position position="206"/>
    </location>
</feature>
<proteinExistence type="inferred from homology"/>
<keyword id="KW-1132">Decay of host mRNAs by virus</keyword>
<keyword id="KW-1262">Eukaryotic host gene expression shutoff by virus</keyword>
<keyword id="KW-1035">Host cytoplasm</keyword>
<keyword id="KW-1190">Host gene expression shutoff by virus</keyword>
<keyword id="KW-1192">Host mRNA suppression by virus</keyword>
<keyword id="KW-1048">Host nucleus</keyword>
<keyword id="KW-0945">Host-virus interaction</keyword>
<keyword id="KW-0688">Ribosomal frameshifting</keyword>
<organism>
    <name type="scientific">Influenza A virus (strain A/Guinea fowl/Hong Kong/38/2002 H5N1 genotype X0)</name>
    <dbReference type="NCBI Taxonomy" id="284208"/>
    <lineage>
        <taxon>Viruses</taxon>
        <taxon>Riboviria</taxon>
        <taxon>Orthornavirae</taxon>
        <taxon>Negarnaviricota</taxon>
        <taxon>Polyploviricotina</taxon>
        <taxon>Insthoviricetes</taxon>
        <taxon>Articulavirales</taxon>
        <taxon>Orthomyxoviridae</taxon>
        <taxon>Alphainfluenzavirus</taxon>
        <taxon>Alphainfluenzavirus influenzae</taxon>
        <taxon>Influenza A virus</taxon>
    </lineage>
</organism>
<accession>P0CK92</accession>
<dbReference type="EMBL" id="AY651622">
    <property type="status" value="NOT_ANNOTATED_CDS"/>
    <property type="molecule type" value="Genomic_RNA"/>
</dbReference>
<dbReference type="SMR" id="P0CK92"/>
<dbReference type="IntAct" id="P0CK92">
    <property type="interactions" value="1"/>
</dbReference>
<dbReference type="GO" id="GO:0003723">
    <property type="term" value="F:RNA binding"/>
    <property type="evidence" value="ECO:0007669"/>
    <property type="project" value="InterPro"/>
</dbReference>
<dbReference type="GO" id="GO:0039694">
    <property type="term" value="P:viral RNA genome replication"/>
    <property type="evidence" value="ECO:0007669"/>
    <property type="project" value="InterPro"/>
</dbReference>
<dbReference type="GO" id="GO:0075523">
    <property type="term" value="P:viral translational frameshifting"/>
    <property type="evidence" value="ECO:0007669"/>
    <property type="project" value="UniProtKB-KW"/>
</dbReference>
<dbReference type="FunFam" id="3.40.91.90:FF:000001">
    <property type="entry name" value="Polymerase acidic protein"/>
    <property type="match status" value="1"/>
</dbReference>
<dbReference type="Gene3D" id="3.40.91.90">
    <property type="entry name" value="Influenza RNA-dependent RNA polymerase subunit PA, endonuclease domain"/>
    <property type="match status" value="1"/>
</dbReference>
<dbReference type="InterPro" id="IPR001009">
    <property type="entry name" value="PA/PA-X"/>
</dbReference>
<dbReference type="InterPro" id="IPR038372">
    <property type="entry name" value="PA/PA-X_sf"/>
</dbReference>
<dbReference type="Pfam" id="PF00603">
    <property type="entry name" value="Flu_PA"/>
    <property type="match status" value="1"/>
</dbReference>
<reference key="1">
    <citation type="journal article" date="2004" name="Nature">
        <title>Genesis of a highly pathogenic and potentially pandemic H5N1 influenza virus in eastern Asia.</title>
        <authorList>
            <person name="Li K.S."/>
            <person name="Guan Y."/>
            <person name="Wang J."/>
            <person name="Smith G.J.D."/>
            <person name="Xu K.M."/>
            <person name="Duan L."/>
            <person name="Rahardjo A.P."/>
            <person name="Puthavathana P."/>
            <person name="Buranathai C."/>
            <person name="Nguyen T.D."/>
            <person name="Estoepangestie A.T.S."/>
            <person name="Chaisingh A."/>
            <person name="Auewarakul P."/>
            <person name="Long H.T."/>
            <person name="Hanh N.T.H."/>
            <person name="Webby R.J."/>
            <person name="Poon L.L.M."/>
            <person name="Chen H."/>
            <person name="Shortridge K.F."/>
            <person name="Yuen K.Y."/>
            <person name="Webster R.G."/>
            <person name="Peiris J.S.M."/>
        </authorList>
    </citation>
    <scope>NUCLEOTIDE SEQUENCE [GENOMIC RNA]</scope>
</reference>
<protein>
    <recommendedName>
        <fullName>Protein PA-X</fullName>
    </recommendedName>
</protein>
<organismHost>
    <name type="scientific">Aves</name>
    <dbReference type="NCBI Taxonomy" id="8782"/>
</organismHost>
<organismHost>
    <name type="scientific">Felis catus</name>
    <name type="common">Cat</name>
    <name type="synonym">Felis silvestris catus</name>
    <dbReference type="NCBI Taxonomy" id="9685"/>
</organismHost>
<organismHost>
    <name type="scientific">Homo sapiens</name>
    <name type="common">Human</name>
    <dbReference type="NCBI Taxonomy" id="9606"/>
</organismHost>
<organismHost>
    <name type="scientific">Panthera pardus</name>
    <name type="common">Leopard</name>
    <name type="synonym">Felis pardus</name>
    <dbReference type="NCBI Taxonomy" id="9691"/>
</organismHost>
<organismHost>
    <name type="scientific">Panthera tigris</name>
    <name type="common">Tiger</name>
    <dbReference type="NCBI Taxonomy" id="9694"/>
</organismHost>
<organismHost>
    <name type="scientific">Sus scrofa</name>
    <name type="common">Pig</name>
    <dbReference type="NCBI Taxonomy" id="9823"/>
</organismHost>
<evidence type="ECO:0000250" key="1">
    <source>
        <dbReference type="UniProtKB" id="P0CK64"/>
    </source>
</evidence>
<evidence type="ECO:0000250" key="2">
    <source>
        <dbReference type="UniProtKB" id="P0CK68"/>
    </source>
</evidence>
<evidence type="ECO:0000250" key="3">
    <source>
        <dbReference type="UniProtKB" id="P0DJW8"/>
    </source>
</evidence>
<evidence type="ECO:0000250" key="4">
    <source>
        <dbReference type="UniProtKB" id="P0DXO5"/>
    </source>
</evidence>
<evidence type="ECO:0000305" key="5"/>
<gene>
    <name type="primary">PA</name>
</gene>
<comment type="function">
    <text evidence="1 4">Plays a major role in the shutoff of the host protein expression by cleaving mRNAs probably via an endonuclease activity. This host shutoff allows the virus to escape from the host antiviral response (By similarity). Hijacks host RNA splicing machinery to selectively target host RNAs containing introns for destruction. This may explain the preferential degradation of RNAs that have undergone co- or post-transcriptional processing (By similarity).</text>
</comment>
<comment type="subcellular location">
    <subcellularLocation>
        <location evidence="4">Host cytoplasm</location>
    </subcellularLocation>
    <subcellularLocation>
        <location evidence="4">Host nucleus</location>
    </subcellularLocation>
</comment>
<comment type="alternative products">
    <event type="ribosomal frameshifting"/>
    <isoform>
        <id>P0CK92-1</id>
        <name>PA-X</name>
        <sequence type="displayed"/>
    </isoform>
    <isoform>
        <id>Q6DNY0-1</id>
        <name>PA</name>
        <sequence type="external"/>
    </isoform>
</comment>
<comment type="domain">
    <text evidence="1 4">The probable endonuclease active site in the N-terminus and the basic amino acid cluster in the C-terminus are important for the shutoff activity. The C-terminus acts as a nuclear localization signal (By similarity). The C-terminus is recruited to host protein complexes involved in nuclear Pol II RNA processing (By similarity).</text>
</comment>
<comment type="similarity">
    <text evidence="5">Belongs to the influenza viruses PA-X family.</text>
</comment>
<name>PAX_I02A1</name>